<dbReference type="EC" id="7.1.1.9"/>
<dbReference type="EMBL" id="Y18001">
    <property type="protein sequence ID" value="CAA77000.1"/>
    <property type="molecule type" value="Genomic_DNA"/>
</dbReference>
<dbReference type="PIR" id="T11512">
    <property type="entry name" value="T11512"/>
</dbReference>
<dbReference type="SMR" id="Q9ZXX8"/>
<dbReference type="CTD" id="4514"/>
<dbReference type="GO" id="GO:0005743">
    <property type="term" value="C:mitochondrial inner membrane"/>
    <property type="evidence" value="ECO:0007669"/>
    <property type="project" value="UniProtKB-SubCell"/>
</dbReference>
<dbReference type="GO" id="GO:0045277">
    <property type="term" value="C:respiratory chain complex IV"/>
    <property type="evidence" value="ECO:0000250"/>
    <property type="project" value="UniProtKB"/>
</dbReference>
<dbReference type="GO" id="GO:0004129">
    <property type="term" value="F:cytochrome-c oxidase activity"/>
    <property type="evidence" value="ECO:0007669"/>
    <property type="project" value="UniProtKB-EC"/>
</dbReference>
<dbReference type="GO" id="GO:0006123">
    <property type="term" value="P:mitochondrial electron transport, cytochrome c to oxygen"/>
    <property type="evidence" value="ECO:0007669"/>
    <property type="project" value="TreeGrafter"/>
</dbReference>
<dbReference type="GO" id="GO:0008535">
    <property type="term" value="P:respiratory chain complex IV assembly"/>
    <property type="evidence" value="ECO:0000250"/>
    <property type="project" value="UniProtKB"/>
</dbReference>
<dbReference type="CDD" id="cd01665">
    <property type="entry name" value="Cyt_c_Oxidase_III"/>
    <property type="match status" value="1"/>
</dbReference>
<dbReference type="FunFam" id="1.10.287.70:FF:000048">
    <property type="entry name" value="Cytochrome c oxidase subunit 3"/>
    <property type="match status" value="1"/>
</dbReference>
<dbReference type="FunFam" id="1.20.120.80:FF:000002">
    <property type="entry name" value="Cytochrome c oxidase subunit 3"/>
    <property type="match status" value="1"/>
</dbReference>
<dbReference type="Gene3D" id="1.10.287.70">
    <property type="match status" value="1"/>
</dbReference>
<dbReference type="Gene3D" id="1.20.120.80">
    <property type="entry name" value="Cytochrome c oxidase, subunit III, four-helix bundle"/>
    <property type="match status" value="1"/>
</dbReference>
<dbReference type="InterPro" id="IPR024791">
    <property type="entry name" value="Cyt_c/ubiquinol_Oxase_su3"/>
</dbReference>
<dbReference type="InterPro" id="IPR033945">
    <property type="entry name" value="Cyt_c_oxase_su3_dom"/>
</dbReference>
<dbReference type="InterPro" id="IPR000298">
    <property type="entry name" value="Cyt_c_oxidase-like_su3"/>
</dbReference>
<dbReference type="InterPro" id="IPR035973">
    <property type="entry name" value="Cyt_c_oxidase_su3-like_sf"/>
</dbReference>
<dbReference type="InterPro" id="IPR013833">
    <property type="entry name" value="Cyt_c_oxidase_su3_a-hlx"/>
</dbReference>
<dbReference type="PANTHER" id="PTHR11403:SF7">
    <property type="entry name" value="CYTOCHROME C OXIDASE SUBUNIT 3"/>
    <property type="match status" value="1"/>
</dbReference>
<dbReference type="PANTHER" id="PTHR11403">
    <property type="entry name" value="CYTOCHROME C OXIDASE SUBUNIT III"/>
    <property type="match status" value="1"/>
</dbReference>
<dbReference type="Pfam" id="PF00510">
    <property type="entry name" value="COX3"/>
    <property type="match status" value="1"/>
</dbReference>
<dbReference type="SUPFAM" id="SSF81452">
    <property type="entry name" value="Cytochrome c oxidase subunit III-like"/>
    <property type="match status" value="1"/>
</dbReference>
<dbReference type="PROSITE" id="PS50253">
    <property type="entry name" value="COX3"/>
    <property type="match status" value="1"/>
</dbReference>
<accession>Q9ZXX8</accession>
<organism>
    <name type="scientific">Papio hamadryas</name>
    <name type="common">Hamadryas baboon</name>
    <dbReference type="NCBI Taxonomy" id="9557"/>
    <lineage>
        <taxon>Eukaryota</taxon>
        <taxon>Metazoa</taxon>
        <taxon>Chordata</taxon>
        <taxon>Craniata</taxon>
        <taxon>Vertebrata</taxon>
        <taxon>Euteleostomi</taxon>
        <taxon>Mammalia</taxon>
        <taxon>Eutheria</taxon>
        <taxon>Euarchontoglires</taxon>
        <taxon>Primates</taxon>
        <taxon>Haplorrhini</taxon>
        <taxon>Catarrhini</taxon>
        <taxon>Cercopithecidae</taxon>
        <taxon>Cercopithecinae</taxon>
        <taxon>Papio</taxon>
    </lineage>
</organism>
<evidence type="ECO:0000250" key="1">
    <source>
        <dbReference type="UniProtKB" id="P00415"/>
    </source>
</evidence>
<evidence type="ECO:0000250" key="2">
    <source>
        <dbReference type="UniProtKB" id="P00420"/>
    </source>
</evidence>
<evidence type="ECO:0000305" key="3"/>
<geneLocation type="mitochondrion"/>
<proteinExistence type="inferred from homology"/>
<gene>
    <name type="primary">MT-CO3</name>
    <name type="synonym">COIII</name>
    <name type="synonym">COXIII</name>
    <name type="synonym">MTCO3</name>
</gene>
<sequence length="261" mass="30036">MTHQLHAYHMVKPSPWPLTGALSAFLLTSGLIMWFHFYSTALLTLGLLTNVLTMYQWWRDIIRESTYQGHHTTPVQKSLRYGMTLFIISEVFFFAGFFWAFYHSSLAPTPRLGCHWPPTGITPLNPLEVPLLNTSVLLASGVTITWAHHSLMNGNRKQTIQALLITILLGTYFTLVQISEYFEAPFTISDGIYGSTFFVATGFHGLHVIIGSTFLLICLIRQLFYHFTPSHHFGFEAAAWYWHFVDVIWLFLYISIYWWGS</sequence>
<name>COX3_PAPHA</name>
<protein>
    <recommendedName>
        <fullName>Cytochrome c oxidase subunit 3</fullName>
        <ecNumber>7.1.1.9</ecNumber>
    </recommendedName>
    <alternativeName>
        <fullName>Cytochrome c oxidase polypeptide III</fullName>
    </alternativeName>
</protein>
<comment type="function">
    <text evidence="2">Component of the cytochrome c oxidase, the last enzyme in the mitochondrial electron transport chain which drives oxidative phosphorylation. The respiratory chain contains 3 multisubunit complexes succinate dehydrogenase (complex II, CII), ubiquinol-cytochrome c oxidoreductase (cytochrome b-c1 complex, complex III, CIII) and cytochrome c oxidase (complex IV, CIV), that cooperate to transfer electrons derived from NADH and succinate to molecular oxygen, creating an electrochemical gradient over the inner membrane that drives transmembrane transport and the ATP synthase. Cytochrome c oxidase is the component of the respiratory chain that catalyzes the reduction of oxygen to water. Electrons originating from reduced cytochrome c in the intermembrane space (IMS) are transferred via the dinuclear copper A center (CU(A)) of subunit 2 and heme A of subunit 1 to the active site in subunit 1, a binuclear center (BNC) formed by heme A3 and copper B (CU(B)). The BNC reduces molecular oxygen to 2 water molecules using 4 electrons from cytochrome c in the IMS and 4 protons from the mitochondrial matrix.</text>
</comment>
<comment type="catalytic activity">
    <reaction evidence="2">
        <text>4 Fe(II)-[cytochrome c] + O2 + 8 H(+)(in) = 4 Fe(III)-[cytochrome c] + 2 H2O + 4 H(+)(out)</text>
        <dbReference type="Rhea" id="RHEA:11436"/>
        <dbReference type="Rhea" id="RHEA-COMP:10350"/>
        <dbReference type="Rhea" id="RHEA-COMP:14399"/>
        <dbReference type="ChEBI" id="CHEBI:15377"/>
        <dbReference type="ChEBI" id="CHEBI:15378"/>
        <dbReference type="ChEBI" id="CHEBI:15379"/>
        <dbReference type="ChEBI" id="CHEBI:29033"/>
        <dbReference type="ChEBI" id="CHEBI:29034"/>
        <dbReference type="EC" id="7.1.1.9"/>
    </reaction>
    <physiologicalReaction direction="left-to-right" evidence="2">
        <dbReference type="Rhea" id="RHEA:11437"/>
    </physiologicalReaction>
</comment>
<comment type="subunit">
    <text evidence="1">Component of the cytochrome c oxidase (complex IV, CIV), a multisubunit enzyme composed of 14 subunits. The complex is composed of a catalytic core of 3 subunits MT-CO1, MT-CO2 and MT-CO3, encoded in the mitochondrial DNA, and 11 supernumerary subunits COX4I, COX5A, COX5B, COX6A, COX6B, COX6C, COX7A, COX7B, COX7C, COX8 and NDUFA4, which are encoded in the nuclear genome. The complex exists as a monomer or a dimer and forms supercomplexes (SCs) in the inner mitochondrial membrane with NADH-ubiquinone oxidoreductase (complex I, CI) and ubiquinol-cytochrome c oxidoreductase (cytochrome b-c1 complex, complex III, CIII), resulting in different assemblies (supercomplex SCI(1)III(2)IV(1) and megacomplex MCI(2)III(2)IV(2)).</text>
</comment>
<comment type="subcellular location">
    <subcellularLocation>
        <location evidence="1">Mitochondrion inner membrane</location>
        <topology evidence="1">Multi-pass membrane protein</topology>
    </subcellularLocation>
</comment>
<comment type="similarity">
    <text evidence="3">Belongs to the cytochrome c oxidase subunit 3 family.</text>
</comment>
<reference key="1">
    <citation type="journal article" date="1998" name="J. Mol. Evol.">
        <title>Molecular timing of primate divergences as estimated by two nonprimate calibration points.</title>
        <authorList>
            <person name="Arnason U."/>
            <person name="Gullberg A."/>
            <person name="Janke A."/>
        </authorList>
    </citation>
    <scope>NUCLEOTIDE SEQUENCE [GENOMIC DNA]</scope>
</reference>
<feature type="chain" id="PRO_0000183825" description="Cytochrome c oxidase subunit 3">
    <location>
        <begin position="1"/>
        <end position="261"/>
    </location>
</feature>
<feature type="topological domain" description="Mitochondrial matrix" evidence="1">
    <location>
        <begin position="1"/>
        <end position="15"/>
    </location>
</feature>
<feature type="transmembrane region" description="Helical; Name=I" evidence="1">
    <location>
        <begin position="16"/>
        <end position="34"/>
    </location>
</feature>
<feature type="topological domain" description="Mitochondrial intermembrane" evidence="1">
    <location>
        <begin position="35"/>
        <end position="40"/>
    </location>
</feature>
<feature type="transmembrane region" description="Helical; Name=II" evidence="1">
    <location>
        <begin position="41"/>
        <end position="66"/>
    </location>
</feature>
<feature type="topological domain" description="Mitochondrial matrix" evidence="1">
    <location>
        <begin position="67"/>
        <end position="72"/>
    </location>
</feature>
<feature type="transmembrane region" description="Helical; Name=III" evidence="1">
    <location>
        <begin position="73"/>
        <end position="105"/>
    </location>
</feature>
<feature type="topological domain" description="Mitochondrial intermembrane" evidence="1">
    <location>
        <begin position="106"/>
        <end position="128"/>
    </location>
</feature>
<feature type="transmembrane region" description="Helical; Name=IV" evidence="1">
    <location>
        <begin position="129"/>
        <end position="152"/>
    </location>
</feature>
<feature type="topological domain" description="Mitochondrial matrix" evidence="1">
    <location>
        <begin position="153"/>
        <end position="155"/>
    </location>
</feature>
<feature type="transmembrane region" description="Helical; Name=V" evidence="1">
    <location>
        <begin position="156"/>
        <end position="183"/>
    </location>
</feature>
<feature type="topological domain" description="Mitochondrial intermembrane" evidence="1">
    <location>
        <begin position="184"/>
        <end position="190"/>
    </location>
</feature>
<feature type="transmembrane region" description="Helical; Name=VI" evidence="1">
    <location>
        <begin position="191"/>
        <end position="223"/>
    </location>
</feature>
<feature type="topological domain" description="Mitochondrial matrix" evidence="1">
    <location>
        <begin position="224"/>
        <end position="232"/>
    </location>
</feature>
<feature type="transmembrane region" description="Helical; Name=VII" evidence="1">
    <location>
        <begin position="233"/>
        <end position="256"/>
    </location>
</feature>
<feature type="topological domain" description="Mitochondrial intermembrane" evidence="1">
    <location>
        <begin position="257"/>
        <end position="261"/>
    </location>
</feature>
<keyword id="KW-0472">Membrane</keyword>
<keyword id="KW-0496">Mitochondrion</keyword>
<keyword id="KW-0999">Mitochondrion inner membrane</keyword>
<keyword id="KW-1278">Translocase</keyword>
<keyword id="KW-0812">Transmembrane</keyword>
<keyword id="KW-1133">Transmembrane helix</keyword>